<organism>
    <name type="scientific">Gorilla gorilla gorilla</name>
    <name type="common">Western lowland gorilla</name>
    <dbReference type="NCBI Taxonomy" id="9595"/>
    <lineage>
        <taxon>Eukaryota</taxon>
        <taxon>Metazoa</taxon>
        <taxon>Chordata</taxon>
        <taxon>Craniata</taxon>
        <taxon>Vertebrata</taxon>
        <taxon>Euteleostomi</taxon>
        <taxon>Mammalia</taxon>
        <taxon>Eutheria</taxon>
        <taxon>Euarchontoglires</taxon>
        <taxon>Primates</taxon>
        <taxon>Haplorrhini</taxon>
        <taxon>Catarrhini</taxon>
        <taxon>Hominidae</taxon>
        <taxon>Gorilla</taxon>
    </lineage>
</organism>
<proteinExistence type="inferred from homology"/>
<evidence type="ECO:0000250" key="1">
    <source>
        <dbReference type="UniProtKB" id="Q91V82"/>
    </source>
</evidence>
<evidence type="ECO:0000250" key="2">
    <source>
        <dbReference type="UniProtKB" id="Q96PH6"/>
    </source>
</evidence>
<evidence type="ECO:0000255" key="3"/>
<evidence type="ECO:0000256" key="4">
    <source>
        <dbReference type="SAM" id="MobiDB-lite"/>
    </source>
</evidence>
<evidence type="ECO:0000305" key="5"/>
<name>DB118_GORGO</name>
<sequence length="123" mass="13644">MKLLLLALPMLVLLPQVIPAYSGEKKCWNRSGHCRKQCKDGEAVKDTCKNLRACCVPSNEDHRRVPTTSPTPLSDSTPGIIDDILTVRFTTDYFEVSSKKDMIEESEAGRGTETSLPNVHHSS</sequence>
<accession>A4H220</accession>
<gene>
    <name type="primary">DEFB118</name>
</gene>
<reference key="1">
    <citation type="submission" date="2006-11" db="EMBL/GenBank/DDBJ databases">
        <title>Evolution and sequence variation of human beta-defensin genes.</title>
        <authorList>
            <person name="Hollox E.J."/>
            <person name="Armour J.A.L."/>
        </authorList>
    </citation>
    <scope>NUCLEOTIDE SEQUENCE [GENOMIC DNA]</scope>
</reference>
<dbReference type="EMBL" id="AM410125">
    <property type="protein sequence ID" value="CAL68940.1"/>
    <property type="molecule type" value="Genomic_DNA"/>
</dbReference>
<dbReference type="RefSeq" id="XP_004061990.1">
    <property type="nucleotide sequence ID" value="XM_004061942.5"/>
</dbReference>
<dbReference type="SMR" id="A4H220"/>
<dbReference type="STRING" id="9593.ENSGGOP00000052204"/>
<dbReference type="Ensembl" id="ENSGGOT00000068512.1">
    <property type="protein sequence ID" value="ENSGGOP00000052204.1"/>
    <property type="gene ID" value="ENSGGOG00000042168.1"/>
</dbReference>
<dbReference type="GeneID" id="101138356"/>
<dbReference type="KEGG" id="ggo:101138356"/>
<dbReference type="CTD" id="117285"/>
<dbReference type="eggNOG" id="ENOG502TM86">
    <property type="taxonomic scope" value="Eukaryota"/>
</dbReference>
<dbReference type="GeneTree" id="ENSGT00530000064565"/>
<dbReference type="HOGENOM" id="CLU_164142_0_0_1"/>
<dbReference type="InParanoid" id="A4H220"/>
<dbReference type="OrthoDB" id="13419at9604"/>
<dbReference type="Proteomes" id="UP000001519">
    <property type="component" value="Chromosome 20"/>
</dbReference>
<dbReference type="GO" id="GO:0005576">
    <property type="term" value="C:extracellular region"/>
    <property type="evidence" value="ECO:0007669"/>
    <property type="project" value="UniProtKB-SubCell"/>
</dbReference>
<dbReference type="GO" id="GO:0001530">
    <property type="term" value="F:lipopolysaccharide binding"/>
    <property type="evidence" value="ECO:0000250"/>
    <property type="project" value="UniProtKB"/>
</dbReference>
<dbReference type="GO" id="GO:0140912">
    <property type="term" value="F:membrane destabilizing activity"/>
    <property type="evidence" value="ECO:0007669"/>
    <property type="project" value="Ensembl"/>
</dbReference>
<dbReference type="GO" id="GO:0061844">
    <property type="term" value="P:antimicrobial humoral immune response mediated by antimicrobial peptide"/>
    <property type="evidence" value="ECO:0007669"/>
    <property type="project" value="Ensembl"/>
</dbReference>
<dbReference type="GO" id="GO:0050829">
    <property type="term" value="P:defense response to Gram-negative bacterium"/>
    <property type="evidence" value="ECO:0000250"/>
    <property type="project" value="UniProtKB"/>
</dbReference>
<dbReference type="GO" id="GO:0050830">
    <property type="term" value="P:defense response to Gram-positive bacterium"/>
    <property type="evidence" value="ECO:0000250"/>
    <property type="project" value="UniProtKB"/>
</dbReference>
<dbReference type="GO" id="GO:0045087">
    <property type="term" value="P:innate immune response"/>
    <property type="evidence" value="ECO:0000250"/>
    <property type="project" value="UniProtKB"/>
</dbReference>
<dbReference type="GO" id="GO:0031640">
    <property type="term" value="P:killing of cells of another organism"/>
    <property type="evidence" value="ECO:0000250"/>
    <property type="project" value="UniProtKB"/>
</dbReference>
<dbReference type="GO" id="GO:0007162">
    <property type="term" value="P:negative regulation of cell adhesion"/>
    <property type="evidence" value="ECO:0000250"/>
    <property type="project" value="UniProtKB"/>
</dbReference>
<dbReference type="GO" id="GO:0031665">
    <property type="term" value="P:negative regulation of lipopolysaccharide-mediated signaling pathway"/>
    <property type="evidence" value="ECO:0000250"/>
    <property type="project" value="UniProtKB"/>
</dbReference>
<dbReference type="InterPro" id="IPR050544">
    <property type="entry name" value="Beta-defensin"/>
</dbReference>
<dbReference type="InterPro" id="IPR025933">
    <property type="entry name" value="Beta_defensin_dom"/>
</dbReference>
<dbReference type="PANTHER" id="PTHR15001">
    <property type="entry name" value="BETA-DEFENSIN 123-RELATED"/>
    <property type="match status" value="1"/>
</dbReference>
<dbReference type="PANTHER" id="PTHR15001:SF7">
    <property type="entry name" value="DEFENSIN BETA 118"/>
    <property type="match status" value="1"/>
</dbReference>
<dbReference type="Pfam" id="PF13841">
    <property type="entry name" value="Defensin_beta_2"/>
    <property type="match status" value="1"/>
</dbReference>
<keyword id="KW-0044">Antibiotic</keyword>
<keyword id="KW-0929">Antimicrobial</keyword>
<keyword id="KW-0165">Cleavage on pair of basic residues</keyword>
<keyword id="KW-0211">Defensin</keyword>
<keyword id="KW-1015">Disulfide bond</keyword>
<keyword id="KW-1185">Reference proteome</keyword>
<keyword id="KW-0964">Secreted</keyword>
<keyword id="KW-0732">Signal</keyword>
<feature type="signal peptide" evidence="3">
    <location>
        <begin position="1"/>
        <end position="19"/>
    </location>
</feature>
<feature type="peptide" id="PRO_0000289822" description="Defensin beta 118">
    <location>
        <begin position="20"/>
        <end position="62"/>
    </location>
</feature>
<feature type="propeptide" id="PRO_0000289823" evidence="3">
    <location>
        <begin position="65"/>
        <end position="123"/>
    </location>
</feature>
<feature type="region of interest" description="Disordered" evidence="4">
    <location>
        <begin position="100"/>
        <end position="123"/>
    </location>
</feature>
<feature type="compositionally biased region" description="Basic and acidic residues" evidence="4">
    <location>
        <begin position="100"/>
        <end position="110"/>
    </location>
</feature>
<feature type="compositionally biased region" description="Polar residues" evidence="4">
    <location>
        <begin position="112"/>
        <end position="123"/>
    </location>
</feature>
<feature type="disulfide bond" evidence="1">
    <location>
        <begin position="27"/>
        <end position="54"/>
    </location>
</feature>
<feature type="disulfide bond" evidence="1">
    <location>
        <begin position="34"/>
        <end position="48"/>
    </location>
</feature>
<feature type="disulfide bond" evidence="1">
    <location>
        <begin position="38"/>
        <end position="55"/>
    </location>
</feature>
<protein>
    <recommendedName>
        <fullName evidence="2">Defensin beta 118</fullName>
    </recommendedName>
    <alternativeName>
        <fullName evidence="5">Beta-defensin 118</fullName>
    </alternativeName>
</protein>
<comment type="function">
    <text evidence="2">Host defense peptide that exhibits antimicrobial activity against both Gram-negative bacteria, such as E.coli and S.typhimurium, and Gram-positive bacteria, such as S.aureus and B.subtilis (By similarity). Inhibits cell adhesion of E.coli on intestinal epithelial enterocytes (By similarity). Causes rapid permeabilization of both the outer and inner membrane of E.coli, leading to morphological alterations on the bacterial surface (By similarity). Binds to bacterial lipopolysaccharides (LPS) with high affinity, and may thereby be involved in immunoregulation through LPS neutralization (By similarity). May contribute to epididymal innate immunity and protect the sperm against attack by microorganisms (By similarity).</text>
</comment>
<comment type="subcellular location">
    <subcellularLocation>
        <location evidence="2">Secreted</location>
    </subcellularLocation>
</comment>
<comment type="PTM">
    <text evidence="2">The three-dimensional structure formed by the three intramolecular disulfide bridges is indispensable for antimicrobial activity.</text>
</comment>
<comment type="similarity">
    <text evidence="5">Belongs to the beta-defensin family.</text>
</comment>